<dbReference type="EC" id="5.4.2.10" evidence="1"/>
<dbReference type="EMBL" id="CP000158">
    <property type="protein sequence ID" value="ABI78508.1"/>
    <property type="molecule type" value="Genomic_DNA"/>
</dbReference>
<dbReference type="RefSeq" id="WP_011645202.1">
    <property type="nucleotide sequence ID" value="NC_008358.1"/>
</dbReference>
<dbReference type="SMR" id="Q0C5U1"/>
<dbReference type="STRING" id="228405.HNE_0168"/>
<dbReference type="KEGG" id="hne:HNE_0168"/>
<dbReference type="eggNOG" id="COG1109">
    <property type="taxonomic scope" value="Bacteria"/>
</dbReference>
<dbReference type="HOGENOM" id="CLU_016950_7_0_5"/>
<dbReference type="Proteomes" id="UP000001959">
    <property type="component" value="Chromosome"/>
</dbReference>
<dbReference type="GO" id="GO:0005829">
    <property type="term" value="C:cytosol"/>
    <property type="evidence" value="ECO:0007669"/>
    <property type="project" value="TreeGrafter"/>
</dbReference>
<dbReference type="GO" id="GO:0000287">
    <property type="term" value="F:magnesium ion binding"/>
    <property type="evidence" value="ECO:0007669"/>
    <property type="project" value="UniProtKB-UniRule"/>
</dbReference>
<dbReference type="GO" id="GO:0008966">
    <property type="term" value="F:phosphoglucosamine mutase activity"/>
    <property type="evidence" value="ECO:0007669"/>
    <property type="project" value="UniProtKB-UniRule"/>
</dbReference>
<dbReference type="GO" id="GO:0004615">
    <property type="term" value="F:phosphomannomutase activity"/>
    <property type="evidence" value="ECO:0007669"/>
    <property type="project" value="TreeGrafter"/>
</dbReference>
<dbReference type="GO" id="GO:0005975">
    <property type="term" value="P:carbohydrate metabolic process"/>
    <property type="evidence" value="ECO:0007669"/>
    <property type="project" value="InterPro"/>
</dbReference>
<dbReference type="GO" id="GO:0009252">
    <property type="term" value="P:peptidoglycan biosynthetic process"/>
    <property type="evidence" value="ECO:0007669"/>
    <property type="project" value="TreeGrafter"/>
</dbReference>
<dbReference type="GO" id="GO:0006048">
    <property type="term" value="P:UDP-N-acetylglucosamine biosynthetic process"/>
    <property type="evidence" value="ECO:0007669"/>
    <property type="project" value="TreeGrafter"/>
</dbReference>
<dbReference type="CDD" id="cd05802">
    <property type="entry name" value="GlmM"/>
    <property type="match status" value="1"/>
</dbReference>
<dbReference type="FunFam" id="3.30.310.50:FF:000001">
    <property type="entry name" value="Phosphoglucosamine mutase"/>
    <property type="match status" value="1"/>
</dbReference>
<dbReference type="FunFam" id="3.40.120.10:FF:000001">
    <property type="entry name" value="Phosphoglucosamine mutase"/>
    <property type="match status" value="1"/>
</dbReference>
<dbReference type="FunFam" id="3.40.120.10:FF:000002">
    <property type="entry name" value="Phosphoglucosamine mutase"/>
    <property type="match status" value="1"/>
</dbReference>
<dbReference type="Gene3D" id="3.40.120.10">
    <property type="entry name" value="Alpha-D-Glucose-1,6-Bisphosphate, subunit A, domain 3"/>
    <property type="match status" value="3"/>
</dbReference>
<dbReference type="Gene3D" id="3.30.310.50">
    <property type="entry name" value="Alpha-D-phosphohexomutase, C-terminal domain"/>
    <property type="match status" value="1"/>
</dbReference>
<dbReference type="HAMAP" id="MF_01554_B">
    <property type="entry name" value="GlmM_B"/>
    <property type="match status" value="1"/>
</dbReference>
<dbReference type="InterPro" id="IPR005844">
    <property type="entry name" value="A-D-PHexomutase_a/b/a-I"/>
</dbReference>
<dbReference type="InterPro" id="IPR016055">
    <property type="entry name" value="A-D-PHexomutase_a/b/a-I/II/III"/>
</dbReference>
<dbReference type="InterPro" id="IPR005845">
    <property type="entry name" value="A-D-PHexomutase_a/b/a-II"/>
</dbReference>
<dbReference type="InterPro" id="IPR005846">
    <property type="entry name" value="A-D-PHexomutase_a/b/a-III"/>
</dbReference>
<dbReference type="InterPro" id="IPR005843">
    <property type="entry name" value="A-D-PHexomutase_C"/>
</dbReference>
<dbReference type="InterPro" id="IPR036900">
    <property type="entry name" value="A-D-PHexomutase_C_sf"/>
</dbReference>
<dbReference type="InterPro" id="IPR005841">
    <property type="entry name" value="Alpha-D-phosphohexomutase_SF"/>
</dbReference>
<dbReference type="InterPro" id="IPR006352">
    <property type="entry name" value="GlmM_bact"/>
</dbReference>
<dbReference type="InterPro" id="IPR050060">
    <property type="entry name" value="Phosphoglucosamine_mutase"/>
</dbReference>
<dbReference type="NCBIfam" id="TIGR01455">
    <property type="entry name" value="glmM"/>
    <property type="match status" value="1"/>
</dbReference>
<dbReference type="NCBIfam" id="NF008139">
    <property type="entry name" value="PRK10887.1"/>
    <property type="match status" value="1"/>
</dbReference>
<dbReference type="PANTHER" id="PTHR42946:SF1">
    <property type="entry name" value="PHOSPHOGLUCOMUTASE (ALPHA-D-GLUCOSE-1,6-BISPHOSPHATE-DEPENDENT)"/>
    <property type="match status" value="1"/>
</dbReference>
<dbReference type="PANTHER" id="PTHR42946">
    <property type="entry name" value="PHOSPHOHEXOSE MUTASE"/>
    <property type="match status" value="1"/>
</dbReference>
<dbReference type="Pfam" id="PF02878">
    <property type="entry name" value="PGM_PMM_I"/>
    <property type="match status" value="1"/>
</dbReference>
<dbReference type="Pfam" id="PF02879">
    <property type="entry name" value="PGM_PMM_II"/>
    <property type="match status" value="1"/>
</dbReference>
<dbReference type="Pfam" id="PF02880">
    <property type="entry name" value="PGM_PMM_III"/>
    <property type="match status" value="1"/>
</dbReference>
<dbReference type="Pfam" id="PF00408">
    <property type="entry name" value="PGM_PMM_IV"/>
    <property type="match status" value="1"/>
</dbReference>
<dbReference type="PRINTS" id="PR00509">
    <property type="entry name" value="PGMPMM"/>
</dbReference>
<dbReference type="SUPFAM" id="SSF55957">
    <property type="entry name" value="Phosphoglucomutase, C-terminal domain"/>
    <property type="match status" value="1"/>
</dbReference>
<dbReference type="SUPFAM" id="SSF53738">
    <property type="entry name" value="Phosphoglucomutase, first 3 domains"/>
    <property type="match status" value="3"/>
</dbReference>
<gene>
    <name evidence="1" type="primary">glmM</name>
    <name type="ordered locus">HNE_0168</name>
</gene>
<sequence>MARQYFGTDGIRGRVNTSPMTAETALRLSIAAARTFAPEGGREVVIGRDTRRSGDMIEAALVAGFTSMGITPVLLGVVPTPAVALMARETGAALGVMVSASHNKFEDNGLKLFSPEGIKFDDDTEEALEMAMGTALKGEYAAPAEITLPRTMAGTSNRYVRRCLDTLAGGQDFSKLKVVLDCAHGAGFETGPAALTELGAQLTVIGAAPDGININAGFGSTATGALKAAVLETGAHIGIALDGDADRLIVIDETGTEADGDQVMGLIAGEMHRTGRLKGGGMVATVMSNMGLSEYLKTEGLTLARTKVGDRYVGEHMRAHGFNLGGEQSGHIILSDVSTTGDGLLAGLQILSVLAARGGKASDMLRVFTPAPQELINIRYSGANPLESDRVKTALAEAEGLLGDRGRMVVRKSGTEPLIRVMAEALDEDLMLKALHHAANAVTAAAGNS</sequence>
<evidence type="ECO:0000255" key="1">
    <source>
        <dbReference type="HAMAP-Rule" id="MF_01554"/>
    </source>
</evidence>
<name>GLMM_HYPNA</name>
<reference key="1">
    <citation type="journal article" date="2006" name="J. Bacteriol.">
        <title>Comparative genomic evidence for a close relationship between the dimorphic prosthecate bacteria Hyphomonas neptunium and Caulobacter crescentus.</title>
        <authorList>
            <person name="Badger J.H."/>
            <person name="Hoover T.R."/>
            <person name="Brun Y.V."/>
            <person name="Weiner R.M."/>
            <person name="Laub M.T."/>
            <person name="Alexandre G."/>
            <person name="Mrazek J."/>
            <person name="Ren Q."/>
            <person name="Paulsen I.T."/>
            <person name="Nelson K.E."/>
            <person name="Khouri H.M."/>
            <person name="Radune D."/>
            <person name="Sosa J."/>
            <person name="Dodson R.J."/>
            <person name="Sullivan S.A."/>
            <person name="Rosovitz M.J."/>
            <person name="Madupu R."/>
            <person name="Brinkac L.M."/>
            <person name="Durkin A.S."/>
            <person name="Daugherty S.C."/>
            <person name="Kothari S.P."/>
            <person name="Giglio M.G."/>
            <person name="Zhou L."/>
            <person name="Haft D.H."/>
            <person name="Selengut J.D."/>
            <person name="Davidsen T.M."/>
            <person name="Yang Q."/>
            <person name="Zafar N."/>
            <person name="Ward N.L."/>
        </authorList>
    </citation>
    <scope>NUCLEOTIDE SEQUENCE [LARGE SCALE GENOMIC DNA]</scope>
    <source>
        <strain>ATCC 15444</strain>
    </source>
</reference>
<accession>Q0C5U1</accession>
<proteinExistence type="inferred from homology"/>
<organism>
    <name type="scientific">Hyphomonas neptunium (strain ATCC 15444)</name>
    <dbReference type="NCBI Taxonomy" id="228405"/>
    <lineage>
        <taxon>Bacteria</taxon>
        <taxon>Pseudomonadati</taxon>
        <taxon>Pseudomonadota</taxon>
        <taxon>Alphaproteobacteria</taxon>
        <taxon>Hyphomonadales</taxon>
        <taxon>Hyphomonadaceae</taxon>
        <taxon>Hyphomonas</taxon>
    </lineage>
</organism>
<comment type="function">
    <text evidence="1">Catalyzes the conversion of glucosamine-6-phosphate to glucosamine-1-phosphate.</text>
</comment>
<comment type="catalytic activity">
    <reaction evidence="1">
        <text>alpha-D-glucosamine 1-phosphate = D-glucosamine 6-phosphate</text>
        <dbReference type="Rhea" id="RHEA:23424"/>
        <dbReference type="ChEBI" id="CHEBI:58516"/>
        <dbReference type="ChEBI" id="CHEBI:58725"/>
        <dbReference type="EC" id="5.4.2.10"/>
    </reaction>
</comment>
<comment type="cofactor">
    <cofactor evidence="1">
        <name>Mg(2+)</name>
        <dbReference type="ChEBI" id="CHEBI:18420"/>
    </cofactor>
    <text evidence="1">Binds 1 Mg(2+) ion per subunit.</text>
</comment>
<comment type="PTM">
    <text evidence="1">Activated by phosphorylation.</text>
</comment>
<comment type="similarity">
    <text evidence="1">Belongs to the phosphohexose mutase family.</text>
</comment>
<feature type="chain" id="PRO_0000305642" description="Phosphoglucosamine mutase">
    <location>
        <begin position="1"/>
        <end position="449"/>
    </location>
</feature>
<feature type="active site" description="Phosphoserine intermediate" evidence="1">
    <location>
        <position position="101"/>
    </location>
</feature>
<feature type="binding site" description="via phosphate group" evidence="1">
    <location>
        <position position="101"/>
    </location>
    <ligand>
        <name>Mg(2+)</name>
        <dbReference type="ChEBI" id="CHEBI:18420"/>
    </ligand>
</feature>
<feature type="binding site" evidence="1">
    <location>
        <position position="242"/>
    </location>
    <ligand>
        <name>Mg(2+)</name>
        <dbReference type="ChEBI" id="CHEBI:18420"/>
    </ligand>
</feature>
<feature type="binding site" evidence="1">
    <location>
        <position position="244"/>
    </location>
    <ligand>
        <name>Mg(2+)</name>
        <dbReference type="ChEBI" id="CHEBI:18420"/>
    </ligand>
</feature>
<feature type="binding site" evidence="1">
    <location>
        <position position="246"/>
    </location>
    <ligand>
        <name>Mg(2+)</name>
        <dbReference type="ChEBI" id="CHEBI:18420"/>
    </ligand>
</feature>
<feature type="modified residue" description="Phosphoserine" evidence="1">
    <location>
        <position position="101"/>
    </location>
</feature>
<keyword id="KW-0413">Isomerase</keyword>
<keyword id="KW-0460">Magnesium</keyword>
<keyword id="KW-0479">Metal-binding</keyword>
<keyword id="KW-0597">Phosphoprotein</keyword>
<keyword id="KW-1185">Reference proteome</keyword>
<protein>
    <recommendedName>
        <fullName evidence="1">Phosphoglucosamine mutase</fullName>
        <ecNumber evidence="1">5.4.2.10</ecNumber>
    </recommendedName>
</protein>